<name>NUOH_RHIJ3</name>
<reference key="1">
    <citation type="journal article" date="2006" name="Genome Biol.">
        <title>The genome of Rhizobium leguminosarum has recognizable core and accessory components.</title>
        <authorList>
            <person name="Young J.P.W."/>
            <person name="Crossman L.C."/>
            <person name="Johnston A.W.B."/>
            <person name="Thomson N.R."/>
            <person name="Ghazoui Z.F."/>
            <person name="Hull K.H."/>
            <person name="Wexler M."/>
            <person name="Curson A.R.J."/>
            <person name="Todd J.D."/>
            <person name="Poole P.S."/>
            <person name="Mauchline T.H."/>
            <person name="East A.K."/>
            <person name="Quail M.A."/>
            <person name="Churcher C."/>
            <person name="Arrowsmith C."/>
            <person name="Cherevach I."/>
            <person name="Chillingworth T."/>
            <person name="Clarke K."/>
            <person name="Cronin A."/>
            <person name="Davis P."/>
            <person name="Fraser A."/>
            <person name="Hance Z."/>
            <person name="Hauser H."/>
            <person name="Jagels K."/>
            <person name="Moule S."/>
            <person name="Mungall K."/>
            <person name="Norbertczak H."/>
            <person name="Rabbinowitsch E."/>
            <person name="Sanders M."/>
            <person name="Simmonds M."/>
            <person name="Whitehead S."/>
            <person name="Parkhill J."/>
        </authorList>
    </citation>
    <scope>NUCLEOTIDE SEQUENCE [LARGE SCALE GENOMIC DNA]</scope>
    <source>
        <strain>DSM 114642 / LMG 32736 / 3841</strain>
    </source>
</reference>
<comment type="function">
    <text evidence="1">NDH-1 shuttles electrons from NADH, via FMN and iron-sulfur (Fe-S) centers, to quinones in the respiratory chain. The immediate electron acceptor for the enzyme in this species is believed to be ubiquinone. Couples the redox reaction to proton translocation (for every two electrons transferred, four hydrogen ions are translocated across the cytoplasmic membrane), and thus conserves the redox energy in a proton gradient. This subunit may bind ubiquinone.</text>
</comment>
<comment type="catalytic activity">
    <reaction evidence="1">
        <text>a quinone + NADH + 5 H(+)(in) = a quinol + NAD(+) + 4 H(+)(out)</text>
        <dbReference type="Rhea" id="RHEA:57888"/>
        <dbReference type="ChEBI" id="CHEBI:15378"/>
        <dbReference type="ChEBI" id="CHEBI:24646"/>
        <dbReference type="ChEBI" id="CHEBI:57540"/>
        <dbReference type="ChEBI" id="CHEBI:57945"/>
        <dbReference type="ChEBI" id="CHEBI:132124"/>
    </reaction>
</comment>
<comment type="subunit">
    <text evidence="1">NDH-1 is composed of 14 different subunits. Subunits NuoA, H, J, K, L, M, N constitute the membrane sector of the complex.</text>
</comment>
<comment type="subcellular location">
    <subcellularLocation>
        <location evidence="1">Cell inner membrane</location>
        <topology evidence="1">Multi-pass membrane protein</topology>
    </subcellularLocation>
</comment>
<comment type="similarity">
    <text evidence="1">Belongs to the complex I subunit 1 family.</text>
</comment>
<protein>
    <recommendedName>
        <fullName evidence="1">NADH-quinone oxidoreductase subunit H</fullName>
        <ecNumber evidence="1">7.1.1.-</ecNumber>
    </recommendedName>
    <alternativeName>
        <fullName evidence="1">NADH dehydrogenase I subunit H</fullName>
    </alternativeName>
    <alternativeName>
        <fullName evidence="1">NDH-1 subunit H</fullName>
    </alternativeName>
</protein>
<gene>
    <name evidence="1" type="primary">nuoH</name>
    <name type="ordered locus">RL1708</name>
</gene>
<feature type="chain" id="PRO_0000244936" description="NADH-quinone oxidoreductase subunit H">
    <location>
        <begin position="1"/>
        <end position="347"/>
    </location>
</feature>
<feature type="transmembrane region" description="Helical" evidence="1">
    <location>
        <begin position="13"/>
        <end position="33"/>
    </location>
</feature>
<feature type="transmembrane region" description="Helical" evidence="1">
    <location>
        <begin position="50"/>
        <end position="70"/>
    </location>
</feature>
<feature type="transmembrane region" description="Helical" evidence="1">
    <location>
        <begin position="82"/>
        <end position="102"/>
    </location>
</feature>
<feature type="transmembrane region" description="Helical" evidence="1">
    <location>
        <begin position="115"/>
        <end position="135"/>
    </location>
</feature>
<feature type="transmembrane region" description="Helical" evidence="1">
    <location>
        <begin position="161"/>
        <end position="181"/>
    </location>
</feature>
<feature type="transmembrane region" description="Helical" evidence="1">
    <location>
        <begin position="198"/>
        <end position="218"/>
    </location>
</feature>
<feature type="transmembrane region" description="Helical" evidence="1">
    <location>
        <begin position="263"/>
        <end position="283"/>
    </location>
</feature>
<feature type="transmembrane region" description="Helical" evidence="1">
    <location>
        <begin position="286"/>
        <end position="306"/>
    </location>
</feature>
<feature type="transmembrane region" description="Helical" evidence="1">
    <location>
        <begin position="321"/>
        <end position="341"/>
    </location>
</feature>
<evidence type="ECO:0000255" key="1">
    <source>
        <dbReference type="HAMAP-Rule" id="MF_01350"/>
    </source>
</evidence>
<proteinExistence type="inferred from homology"/>
<keyword id="KW-0997">Cell inner membrane</keyword>
<keyword id="KW-1003">Cell membrane</keyword>
<keyword id="KW-0472">Membrane</keyword>
<keyword id="KW-0520">NAD</keyword>
<keyword id="KW-0874">Quinone</keyword>
<keyword id="KW-1278">Translocase</keyword>
<keyword id="KW-0812">Transmembrane</keyword>
<keyword id="KW-1133">Transmembrane helix</keyword>
<keyword id="KW-0830">Ubiquinone</keyword>
<dbReference type="EC" id="7.1.1.-" evidence="1"/>
<dbReference type="EMBL" id="AM236080">
    <property type="protein sequence ID" value="CAK07203.1"/>
    <property type="molecule type" value="Genomic_DNA"/>
</dbReference>
<dbReference type="RefSeq" id="WP_003547383.1">
    <property type="nucleotide sequence ID" value="NC_008380.1"/>
</dbReference>
<dbReference type="SMR" id="Q1MIK7"/>
<dbReference type="EnsemblBacteria" id="CAK07203">
    <property type="protein sequence ID" value="CAK07203"/>
    <property type="gene ID" value="RL1708"/>
</dbReference>
<dbReference type="GeneID" id="84669413"/>
<dbReference type="KEGG" id="rle:RL1708"/>
<dbReference type="eggNOG" id="COG1005">
    <property type="taxonomic scope" value="Bacteria"/>
</dbReference>
<dbReference type="HOGENOM" id="CLU_015134_0_1_5"/>
<dbReference type="Proteomes" id="UP000006575">
    <property type="component" value="Chromosome"/>
</dbReference>
<dbReference type="GO" id="GO:0005886">
    <property type="term" value="C:plasma membrane"/>
    <property type="evidence" value="ECO:0007669"/>
    <property type="project" value="UniProtKB-SubCell"/>
</dbReference>
<dbReference type="GO" id="GO:0003954">
    <property type="term" value="F:NADH dehydrogenase activity"/>
    <property type="evidence" value="ECO:0007669"/>
    <property type="project" value="TreeGrafter"/>
</dbReference>
<dbReference type="GO" id="GO:0016655">
    <property type="term" value="F:oxidoreductase activity, acting on NAD(P)H, quinone or similar compound as acceptor"/>
    <property type="evidence" value="ECO:0007669"/>
    <property type="project" value="UniProtKB-UniRule"/>
</dbReference>
<dbReference type="GO" id="GO:0048038">
    <property type="term" value="F:quinone binding"/>
    <property type="evidence" value="ECO:0007669"/>
    <property type="project" value="UniProtKB-KW"/>
</dbReference>
<dbReference type="GO" id="GO:0009060">
    <property type="term" value="P:aerobic respiration"/>
    <property type="evidence" value="ECO:0007669"/>
    <property type="project" value="TreeGrafter"/>
</dbReference>
<dbReference type="HAMAP" id="MF_01350">
    <property type="entry name" value="NDH1_NuoH"/>
    <property type="match status" value="1"/>
</dbReference>
<dbReference type="InterPro" id="IPR001694">
    <property type="entry name" value="NADH_UbQ_OxRdtase_su1/FPO"/>
</dbReference>
<dbReference type="InterPro" id="IPR018086">
    <property type="entry name" value="NADH_UbQ_OxRdtase_su1_CS"/>
</dbReference>
<dbReference type="NCBIfam" id="NF004741">
    <property type="entry name" value="PRK06076.1-2"/>
    <property type="match status" value="1"/>
</dbReference>
<dbReference type="NCBIfam" id="NF004745">
    <property type="entry name" value="PRK06076.1-6"/>
    <property type="match status" value="1"/>
</dbReference>
<dbReference type="PANTHER" id="PTHR11432">
    <property type="entry name" value="NADH DEHYDROGENASE SUBUNIT 1"/>
    <property type="match status" value="1"/>
</dbReference>
<dbReference type="PANTHER" id="PTHR11432:SF3">
    <property type="entry name" value="NADH-UBIQUINONE OXIDOREDUCTASE CHAIN 1"/>
    <property type="match status" value="1"/>
</dbReference>
<dbReference type="Pfam" id="PF00146">
    <property type="entry name" value="NADHdh"/>
    <property type="match status" value="1"/>
</dbReference>
<dbReference type="PROSITE" id="PS00668">
    <property type="entry name" value="COMPLEX1_ND1_2"/>
    <property type="match status" value="1"/>
</dbReference>
<sequence length="347" mass="38554">MDSFFSTYVWPAIIMIGQSLLLLVCLLVFIAYVLLADRKIWAAVQLRRGPNVVGPFGLFQSFADLLKFVFKEPIIPAGANKAVFLLAPLVTVLLALSTWAVVPLADGWVIANINVGILYIFAISSLEVYGIIMGGWASNSKYPFLGALRSAAQMVSYEVSIGFVIVTVLLCVGSLNLTDIVNAQHTGLGTMLGLPASFLDWHWLSLFPMFIIFFISALAETNRPPFDLPEAESELVAGFMVEYGSSPYMMFMLGEYAAVCLMCALTTILFLGGWLPPVDIWILNWVPGIIWFTLKACFVFFMFAMVKAFVPRYRYDQLMRLGWKVFLPLSLAMVVIVAFVLKLMGWA</sequence>
<accession>Q1MIK7</accession>
<organism>
    <name type="scientific">Rhizobium johnstonii (strain DSM 114642 / LMG 32736 / 3841)</name>
    <name type="common">Rhizobium leguminosarum bv. viciae</name>
    <dbReference type="NCBI Taxonomy" id="216596"/>
    <lineage>
        <taxon>Bacteria</taxon>
        <taxon>Pseudomonadati</taxon>
        <taxon>Pseudomonadota</taxon>
        <taxon>Alphaproteobacteria</taxon>
        <taxon>Hyphomicrobiales</taxon>
        <taxon>Rhizobiaceae</taxon>
        <taxon>Rhizobium/Agrobacterium group</taxon>
        <taxon>Rhizobium</taxon>
        <taxon>Rhizobium johnstonii</taxon>
    </lineage>
</organism>